<accession>Q62665</accession>
<name>LEG8_RAT</name>
<proteinExistence type="evidence at transcript level"/>
<keyword id="KW-0072">Autophagy</keyword>
<keyword id="KW-0963">Cytoplasm</keyword>
<keyword id="KW-0968">Cytoplasmic vesicle</keyword>
<keyword id="KW-0430">Lectin</keyword>
<keyword id="KW-1185">Reference proteome</keyword>
<keyword id="KW-0677">Repeat</keyword>
<sequence>MLSLSNLQNIIYNPTIPYVSTITEQLKPGSLIVIRGHVPKDSERFQVDFQHGNSLKPRADVAFHFNPRFKRSNCIVCNTLTNEKWGWEEITHDMPFRKEKSFEIVIMVLKNKFHVAVNGKHILLYAHRINPEKIDTLGIFGKVNIHSIGFRFSSDLQSMETSTLGLTQISKENIQKSGKLHLSLPFEARLNASMGPGRTVVVKGEVNTNATSFNVDLVAGRSRDIALHLNPRLNVKAFVRNSFLQDAWGEEERNITCFPFSSGMYFEMIIYCDVREFKVAVNGVHSLEYKHRFKDLSSIDTLAVDGDIRLLDVRSW</sequence>
<organism>
    <name type="scientific">Rattus norvegicus</name>
    <name type="common">Rat</name>
    <dbReference type="NCBI Taxonomy" id="10116"/>
    <lineage>
        <taxon>Eukaryota</taxon>
        <taxon>Metazoa</taxon>
        <taxon>Chordata</taxon>
        <taxon>Craniata</taxon>
        <taxon>Vertebrata</taxon>
        <taxon>Euteleostomi</taxon>
        <taxon>Mammalia</taxon>
        <taxon>Eutheria</taxon>
        <taxon>Euarchontoglires</taxon>
        <taxon>Glires</taxon>
        <taxon>Rodentia</taxon>
        <taxon>Myomorpha</taxon>
        <taxon>Muroidea</taxon>
        <taxon>Muridae</taxon>
        <taxon>Murinae</taxon>
        <taxon>Rattus</taxon>
    </lineage>
</organism>
<feature type="chain" id="PRO_0000076945" description="Galectin-8">
    <location>
        <begin position="1"/>
        <end position="316"/>
    </location>
</feature>
<feature type="domain" description="Galectin 1" evidence="3">
    <location>
        <begin position="18"/>
        <end position="151"/>
    </location>
</feature>
<feature type="domain" description="Galectin 2" evidence="3">
    <location>
        <begin position="186"/>
        <end position="316"/>
    </location>
</feature>
<feature type="binding site" evidence="2">
    <location>
        <position position="68"/>
    </location>
    <ligand>
        <name>a carbohydrate</name>
        <dbReference type="ChEBI" id="CHEBI:16646"/>
    </ligand>
</feature>
<feature type="binding site" evidence="2">
    <location>
        <position position="78"/>
    </location>
    <ligand>
        <name>a carbohydrate</name>
        <dbReference type="ChEBI" id="CHEBI:16646"/>
    </ligand>
</feature>
<feature type="binding site" evidence="2">
    <location>
        <position position="88"/>
    </location>
    <ligand>
        <name>a carbohydrate</name>
        <dbReference type="ChEBI" id="CHEBI:16646"/>
    </ligand>
</feature>
<feature type="binding site" evidence="1">
    <location>
        <begin position="248"/>
        <end position="254"/>
    </location>
    <ligand>
        <name>a beta-D-galactoside</name>
        <dbReference type="ChEBI" id="CHEBI:28034"/>
    </ligand>
</feature>
<feature type="site" description="Critical for binding to sialylated and sulfated oligosaccharides" evidence="2">
    <location>
        <position position="58"/>
    </location>
</feature>
<comment type="function">
    <text evidence="2">Beta-galactoside-binding lectin that acts as a sensor of membrane damage caused by infection and restricts the proliferation of infecting pathogens by targeting them for autophagy. Detects membrane rupture by binding beta-galactoside ligands located on the lumenal side of the endosome membrane; these ligands becoming exposed to the cytoplasm following rupture. Restricts infection by initiating autophagy via interaction with CALCOCO2/NDP52. Required to restrict infection of bacterial invasion such as S.typhimurium. Also required to restrict infection of Picornaviridae viruses. Has a marked preference for 3'-O-sialylated and 3'-O-sulfated glycans.</text>
</comment>
<comment type="subunit">
    <text evidence="2">Homodimer. Interacts with CALCOCO2/NDP52. Interacts with PDPN; the interaction is glycosylation-dependent; may participate in connection of the lymphatic endothelium to the surrounding extracellular matrix.</text>
</comment>
<comment type="subcellular location">
    <subcellularLocation>
        <location evidence="2">Cytoplasmic vesicle</location>
    </subcellularLocation>
    <subcellularLocation>
        <location evidence="2">Cytoplasm</location>
        <location evidence="2">Cytosol</location>
    </subcellularLocation>
</comment>
<comment type="tissue specificity">
    <text>Expressed in liver, kidney, cardiac muscle, lung, and brain.</text>
</comment>
<comment type="developmental stage">
    <text>Very low levels in whole embryos, high levels in adult tissues.</text>
</comment>
<comment type="domain">
    <text>Contains two homologous but distinct carbohydrate-binding domains.</text>
</comment>
<reference key="1">
    <citation type="journal article" date="1995" name="J. Biol. Chem.">
        <title>Galectin-8. A new rat lectin, related to galectin-4.</title>
        <authorList>
            <person name="Hadari Y.R."/>
            <person name="Paz K."/>
            <person name="Dekel R."/>
            <person name="Mestrovic T."/>
            <person name="Accili D."/>
            <person name="Zick Y."/>
        </authorList>
    </citation>
    <scope>NUCLEOTIDE SEQUENCE [MRNA]</scope>
    <source>
        <strain>Sprague-Dawley</strain>
        <tissue>Liver</tissue>
    </source>
</reference>
<protein>
    <recommendedName>
        <fullName>Galectin-8</fullName>
        <shortName>Gal-8</shortName>
    </recommendedName>
    <alternativeName>
        <fullName>30 kDa S-type lectin</fullName>
    </alternativeName>
    <alternativeName>
        <fullName>RL-30</fullName>
    </alternativeName>
</protein>
<gene>
    <name type="primary">Lgals8</name>
</gene>
<evidence type="ECO:0000250" key="1"/>
<evidence type="ECO:0000250" key="2">
    <source>
        <dbReference type="UniProtKB" id="O00214"/>
    </source>
</evidence>
<evidence type="ECO:0000255" key="3">
    <source>
        <dbReference type="PROSITE-ProRule" id="PRU00639"/>
    </source>
</evidence>
<dbReference type="EMBL" id="U09824">
    <property type="protein sequence ID" value="AAA66359.1"/>
    <property type="molecule type" value="mRNA"/>
</dbReference>
<dbReference type="PIR" id="A55975">
    <property type="entry name" value="A55975"/>
</dbReference>
<dbReference type="SMR" id="Q62665"/>
<dbReference type="FunCoup" id="Q62665">
    <property type="interactions" value="688"/>
</dbReference>
<dbReference type="STRING" id="10116.ENSRNOP00000040412"/>
<dbReference type="PhosphoSitePlus" id="Q62665"/>
<dbReference type="PaxDb" id="10116-ENSRNOP00000040412"/>
<dbReference type="UCSC" id="RGD:621272">
    <property type="organism name" value="rat"/>
</dbReference>
<dbReference type="AGR" id="RGD:621272"/>
<dbReference type="RGD" id="621272">
    <property type="gene designation" value="Lgals8"/>
</dbReference>
<dbReference type="eggNOG" id="KOG3587">
    <property type="taxonomic scope" value="Eukaryota"/>
</dbReference>
<dbReference type="InParanoid" id="Q62665"/>
<dbReference type="PhylomeDB" id="Q62665"/>
<dbReference type="PRO" id="PR:Q62665"/>
<dbReference type="Proteomes" id="UP000002494">
    <property type="component" value="Unplaced"/>
</dbReference>
<dbReference type="GO" id="GO:0005737">
    <property type="term" value="C:cytoplasm"/>
    <property type="evidence" value="ECO:0000250"/>
    <property type="project" value="UniProtKB"/>
</dbReference>
<dbReference type="GO" id="GO:0031410">
    <property type="term" value="C:cytoplasmic vesicle"/>
    <property type="evidence" value="ECO:0007669"/>
    <property type="project" value="UniProtKB-KW"/>
</dbReference>
<dbReference type="GO" id="GO:0005829">
    <property type="term" value="C:cytosol"/>
    <property type="evidence" value="ECO:0000250"/>
    <property type="project" value="GO_Central"/>
</dbReference>
<dbReference type="GO" id="GO:0030246">
    <property type="term" value="F:carbohydrate binding"/>
    <property type="evidence" value="ECO:0000250"/>
    <property type="project" value="GO_Central"/>
</dbReference>
<dbReference type="GO" id="GO:0005178">
    <property type="term" value="F:integrin binding"/>
    <property type="evidence" value="ECO:0000266"/>
    <property type="project" value="RGD"/>
</dbReference>
<dbReference type="GO" id="GO:0098586">
    <property type="term" value="P:cellular response to virus"/>
    <property type="evidence" value="ECO:0000250"/>
    <property type="project" value="UniProtKB"/>
</dbReference>
<dbReference type="GO" id="GO:1904977">
    <property type="term" value="P:lymphatic endothelial cell migration"/>
    <property type="evidence" value="ECO:0000250"/>
    <property type="project" value="UniProtKB"/>
</dbReference>
<dbReference type="GO" id="GO:0002317">
    <property type="term" value="P:plasma cell differentiation"/>
    <property type="evidence" value="ECO:0000266"/>
    <property type="project" value="RGD"/>
</dbReference>
<dbReference type="GO" id="GO:0031295">
    <property type="term" value="P:T cell costimulation"/>
    <property type="evidence" value="ECO:0000266"/>
    <property type="project" value="RGD"/>
</dbReference>
<dbReference type="GO" id="GO:0098792">
    <property type="term" value="P:xenophagy"/>
    <property type="evidence" value="ECO:0000250"/>
    <property type="project" value="GO_Central"/>
</dbReference>
<dbReference type="CDD" id="cd00070">
    <property type="entry name" value="GLECT"/>
    <property type="match status" value="2"/>
</dbReference>
<dbReference type="FunFam" id="2.60.120.200:FF:000054">
    <property type="entry name" value="Galectin"/>
    <property type="match status" value="1"/>
</dbReference>
<dbReference type="FunFam" id="2.60.120.200:FF:000073">
    <property type="entry name" value="Galectin"/>
    <property type="match status" value="1"/>
</dbReference>
<dbReference type="Gene3D" id="2.60.120.200">
    <property type="match status" value="2"/>
</dbReference>
<dbReference type="InterPro" id="IPR013320">
    <property type="entry name" value="ConA-like_dom_sf"/>
</dbReference>
<dbReference type="InterPro" id="IPR044156">
    <property type="entry name" value="Galectin-like"/>
</dbReference>
<dbReference type="InterPro" id="IPR001079">
    <property type="entry name" value="Galectin_CRD"/>
</dbReference>
<dbReference type="PANTHER" id="PTHR11346">
    <property type="entry name" value="GALECTIN"/>
    <property type="match status" value="1"/>
</dbReference>
<dbReference type="PANTHER" id="PTHR11346:SF22">
    <property type="entry name" value="GALECTIN-8"/>
    <property type="match status" value="1"/>
</dbReference>
<dbReference type="Pfam" id="PF00337">
    <property type="entry name" value="Gal-bind_lectin"/>
    <property type="match status" value="2"/>
</dbReference>
<dbReference type="SMART" id="SM00908">
    <property type="entry name" value="Gal-bind_lectin"/>
    <property type="match status" value="2"/>
</dbReference>
<dbReference type="SMART" id="SM00276">
    <property type="entry name" value="GLECT"/>
    <property type="match status" value="2"/>
</dbReference>
<dbReference type="SUPFAM" id="SSF49899">
    <property type="entry name" value="Concanavalin A-like lectins/glucanases"/>
    <property type="match status" value="2"/>
</dbReference>
<dbReference type="PROSITE" id="PS51304">
    <property type="entry name" value="GALECTIN"/>
    <property type="match status" value="2"/>
</dbReference>